<accession>Q72CF8</accession>
<sequence length="37" mass="4398">MKVRPSVKKICPKCKVIRRRGVLRVICENPRHKQRQG</sequence>
<gene>
    <name evidence="1" type="primary">rpmJ</name>
    <name type="ordered locus">DVU_1325</name>
</gene>
<proteinExistence type="inferred from homology"/>
<dbReference type="EMBL" id="AE017285">
    <property type="protein sequence ID" value="AAS95803.1"/>
    <property type="molecule type" value="Genomic_DNA"/>
</dbReference>
<dbReference type="RefSeq" id="WP_010938620.1">
    <property type="nucleotide sequence ID" value="NC_002937.3"/>
</dbReference>
<dbReference type="RefSeq" id="YP_010544.1">
    <property type="nucleotide sequence ID" value="NC_002937.3"/>
</dbReference>
<dbReference type="SMR" id="Q72CF8"/>
<dbReference type="STRING" id="882.DVU_1325"/>
<dbReference type="PaxDb" id="882-DVU_1325"/>
<dbReference type="EnsemblBacteria" id="AAS95803">
    <property type="protein sequence ID" value="AAS95803"/>
    <property type="gene ID" value="DVU_1325"/>
</dbReference>
<dbReference type="KEGG" id="dvu:DVU_1325"/>
<dbReference type="PATRIC" id="fig|882.5.peg.1237"/>
<dbReference type="eggNOG" id="COG0257">
    <property type="taxonomic scope" value="Bacteria"/>
</dbReference>
<dbReference type="HOGENOM" id="CLU_135723_6_2_7"/>
<dbReference type="OrthoDB" id="9802520at2"/>
<dbReference type="PhylomeDB" id="Q72CF8"/>
<dbReference type="Proteomes" id="UP000002194">
    <property type="component" value="Chromosome"/>
</dbReference>
<dbReference type="GO" id="GO:0005737">
    <property type="term" value="C:cytoplasm"/>
    <property type="evidence" value="ECO:0007669"/>
    <property type="project" value="UniProtKB-ARBA"/>
</dbReference>
<dbReference type="GO" id="GO:1990904">
    <property type="term" value="C:ribonucleoprotein complex"/>
    <property type="evidence" value="ECO:0007669"/>
    <property type="project" value="UniProtKB-KW"/>
</dbReference>
<dbReference type="GO" id="GO:0005840">
    <property type="term" value="C:ribosome"/>
    <property type="evidence" value="ECO:0007669"/>
    <property type="project" value="UniProtKB-KW"/>
</dbReference>
<dbReference type="GO" id="GO:0003735">
    <property type="term" value="F:structural constituent of ribosome"/>
    <property type="evidence" value="ECO:0007669"/>
    <property type="project" value="InterPro"/>
</dbReference>
<dbReference type="GO" id="GO:0006412">
    <property type="term" value="P:translation"/>
    <property type="evidence" value="ECO:0007669"/>
    <property type="project" value="UniProtKB-UniRule"/>
</dbReference>
<dbReference type="HAMAP" id="MF_00251">
    <property type="entry name" value="Ribosomal_bL36"/>
    <property type="match status" value="1"/>
</dbReference>
<dbReference type="InterPro" id="IPR000473">
    <property type="entry name" value="Ribosomal_bL36"/>
</dbReference>
<dbReference type="InterPro" id="IPR035977">
    <property type="entry name" value="Ribosomal_bL36_sp"/>
</dbReference>
<dbReference type="NCBIfam" id="TIGR01022">
    <property type="entry name" value="rpmJ_bact"/>
    <property type="match status" value="1"/>
</dbReference>
<dbReference type="PANTHER" id="PTHR42888">
    <property type="entry name" value="50S RIBOSOMAL PROTEIN L36, CHLOROPLASTIC"/>
    <property type="match status" value="1"/>
</dbReference>
<dbReference type="PANTHER" id="PTHR42888:SF1">
    <property type="entry name" value="LARGE RIBOSOMAL SUBUNIT PROTEIN BL36C"/>
    <property type="match status" value="1"/>
</dbReference>
<dbReference type="Pfam" id="PF00444">
    <property type="entry name" value="Ribosomal_L36"/>
    <property type="match status" value="1"/>
</dbReference>
<dbReference type="SUPFAM" id="SSF57840">
    <property type="entry name" value="Ribosomal protein L36"/>
    <property type="match status" value="1"/>
</dbReference>
<dbReference type="PROSITE" id="PS00828">
    <property type="entry name" value="RIBOSOMAL_L36"/>
    <property type="match status" value="1"/>
</dbReference>
<keyword id="KW-1185">Reference proteome</keyword>
<keyword id="KW-0687">Ribonucleoprotein</keyword>
<keyword id="KW-0689">Ribosomal protein</keyword>
<protein>
    <recommendedName>
        <fullName evidence="1">Large ribosomal subunit protein bL36</fullName>
    </recommendedName>
    <alternativeName>
        <fullName evidence="2">50S ribosomal protein L36</fullName>
    </alternativeName>
</protein>
<feature type="chain" id="PRO_0000126182" description="Large ribosomal subunit protein bL36">
    <location>
        <begin position="1"/>
        <end position="37"/>
    </location>
</feature>
<reference key="1">
    <citation type="journal article" date="2004" name="Nat. Biotechnol.">
        <title>The genome sequence of the anaerobic, sulfate-reducing bacterium Desulfovibrio vulgaris Hildenborough.</title>
        <authorList>
            <person name="Heidelberg J.F."/>
            <person name="Seshadri R."/>
            <person name="Haveman S.A."/>
            <person name="Hemme C.L."/>
            <person name="Paulsen I.T."/>
            <person name="Kolonay J.F."/>
            <person name="Eisen J.A."/>
            <person name="Ward N.L."/>
            <person name="Methe B.A."/>
            <person name="Brinkac L.M."/>
            <person name="Daugherty S.C."/>
            <person name="DeBoy R.T."/>
            <person name="Dodson R.J."/>
            <person name="Durkin A.S."/>
            <person name="Madupu R."/>
            <person name="Nelson W.C."/>
            <person name="Sullivan S.A."/>
            <person name="Fouts D.E."/>
            <person name="Haft D.H."/>
            <person name="Selengut J."/>
            <person name="Peterson J.D."/>
            <person name="Davidsen T.M."/>
            <person name="Zafar N."/>
            <person name="Zhou L."/>
            <person name="Radune D."/>
            <person name="Dimitrov G."/>
            <person name="Hance M."/>
            <person name="Tran K."/>
            <person name="Khouri H.M."/>
            <person name="Gill J."/>
            <person name="Utterback T.R."/>
            <person name="Feldblyum T.V."/>
            <person name="Wall J.D."/>
            <person name="Voordouw G."/>
            <person name="Fraser C.M."/>
        </authorList>
    </citation>
    <scope>NUCLEOTIDE SEQUENCE [LARGE SCALE GENOMIC DNA]</scope>
    <source>
        <strain>ATCC 29579 / DSM 644 / CCUG 34227 / NCIMB 8303 / VKM B-1760 / Hildenborough</strain>
    </source>
</reference>
<organism>
    <name type="scientific">Nitratidesulfovibrio vulgaris (strain ATCC 29579 / DSM 644 / CCUG 34227 / NCIMB 8303 / VKM B-1760 / Hildenborough)</name>
    <name type="common">Desulfovibrio vulgaris</name>
    <dbReference type="NCBI Taxonomy" id="882"/>
    <lineage>
        <taxon>Bacteria</taxon>
        <taxon>Pseudomonadati</taxon>
        <taxon>Thermodesulfobacteriota</taxon>
        <taxon>Desulfovibrionia</taxon>
        <taxon>Desulfovibrionales</taxon>
        <taxon>Desulfovibrionaceae</taxon>
        <taxon>Nitratidesulfovibrio</taxon>
    </lineage>
</organism>
<name>RL36_NITV2</name>
<evidence type="ECO:0000255" key="1">
    <source>
        <dbReference type="HAMAP-Rule" id="MF_00251"/>
    </source>
</evidence>
<evidence type="ECO:0000305" key="2"/>
<comment type="similarity">
    <text evidence="1">Belongs to the bacterial ribosomal protein bL36 family.</text>
</comment>